<comment type="function">
    <text evidence="2">GTP hydrolase that promotes the GTP-dependent binding of aminoacyl-tRNA to the A-site of ribosomes during protein biosynthesis.</text>
</comment>
<comment type="catalytic activity">
    <reaction evidence="2">
        <text>GTP + H2O = GDP + phosphate + H(+)</text>
        <dbReference type="Rhea" id="RHEA:19669"/>
        <dbReference type="ChEBI" id="CHEBI:15377"/>
        <dbReference type="ChEBI" id="CHEBI:15378"/>
        <dbReference type="ChEBI" id="CHEBI:37565"/>
        <dbReference type="ChEBI" id="CHEBI:43474"/>
        <dbReference type="ChEBI" id="CHEBI:58189"/>
        <dbReference type="EC" id="3.6.5.3"/>
    </reaction>
    <physiologicalReaction direction="left-to-right" evidence="2">
        <dbReference type="Rhea" id="RHEA:19670"/>
    </physiologicalReaction>
</comment>
<comment type="subunit">
    <text evidence="2">Monomer.</text>
</comment>
<comment type="subcellular location">
    <subcellularLocation>
        <location evidence="2">Cytoplasm</location>
    </subcellularLocation>
</comment>
<comment type="similarity">
    <text evidence="2">Belongs to the TRAFAC class translation factor GTPase superfamily. Classic translation factor GTPase family. EF-Tu/EF-1A subfamily.</text>
</comment>
<protein>
    <recommendedName>
        <fullName evidence="2">Elongation factor Tu</fullName>
        <shortName evidence="2">EF-Tu</shortName>
        <ecNumber evidence="2">3.6.5.3</ecNumber>
    </recommendedName>
</protein>
<feature type="chain" id="PRO_0000091297" description="Elongation factor Tu">
    <location>
        <begin position="1"/>
        <end position="394"/>
    </location>
</feature>
<feature type="domain" description="tr-type G">
    <location>
        <begin position="10"/>
        <end position="204"/>
    </location>
</feature>
<feature type="region of interest" description="G1" evidence="1">
    <location>
        <begin position="19"/>
        <end position="26"/>
    </location>
</feature>
<feature type="region of interest" description="G2" evidence="1">
    <location>
        <begin position="60"/>
        <end position="64"/>
    </location>
</feature>
<feature type="region of interest" description="G3" evidence="1">
    <location>
        <begin position="81"/>
        <end position="84"/>
    </location>
</feature>
<feature type="region of interest" description="G4" evidence="1">
    <location>
        <begin position="136"/>
        <end position="139"/>
    </location>
</feature>
<feature type="region of interest" description="G5" evidence="1">
    <location>
        <begin position="174"/>
        <end position="176"/>
    </location>
</feature>
<feature type="binding site" evidence="2">
    <location>
        <begin position="19"/>
        <end position="26"/>
    </location>
    <ligand>
        <name>GTP</name>
        <dbReference type="ChEBI" id="CHEBI:37565"/>
    </ligand>
</feature>
<feature type="binding site" evidence="2">
    <location>
        <position position="26"/>
    </location>
    <ligand>
        <name>Mg(2+)</name>
        <dbReference type="ChEBI" id="CHEBI:18420"/>
    </ligand>
</feature>
<feature type="binding site" evidence="2">
    <location>
        <begin position="81"/>
        <end position="85"/>
    </location>
    <ligand>
        <name>GTP</name>
        <dbReference type="ChEBI" id="CHEBI:37565"/>
    </ligand>
</feature>
<feature type="binding site" evidence="2">
    <location>
        <begin position="136"/>
        <end position="139"/>
    </location>
    <ligand>
        <name>GTP</name>
        <dbReference type="ChEBI" id="CHEBI:37565"/>
    </ligand>
</feature>
<organism>
    <name type="scientific">Buchnera aphidicola subsp. Schizaphis graminum (strain Sg)</name>
    <dbReference type="NCBI Taxonomy" id="198804"/>
    <lineage>
        <taxon>Bacteria</taxon>
        <taxon>Pseudomonadati</taxon>
        <taxon>Pseudomonadota</taxon>
        <taxon>Gammaproteobacteria</taxon>
        <taxon>Enterobacterales</taxon>
        <taxon>Erwiniaceae</taxon>
        <taxon>Buchnera</taxon>
    </lineage>
</organism>
<keyword id="KW-0963">Cytoplasm</keyword>
<keyword id="KW-0251">Elongation factor</keyword>
<keyword id="KW-0342">GTP-binding</keyword>
<keyword id="KW-0378">Hydrolase</keyword>
<keyword id="KW-0460">Magnesium</keyword>
<keyword id="KW-0479">Metal-binding</keyword>
<keyword id="KW-0547">Nucleotide-binding</keyword>
<keyword id="KW-0648">Protein biosynthesis</keyword>
<evidence type="ECO:0000250" key="1"/>
<evidence type="ECO:0000255" key="2">
    <source>
        <dbReference type="HAMAP-Rule" id="MF_00118"/>
    </source>
</evidence>
<reference key="1">
    <citation type="journal article" date="2002" name="Science">
        <title>50 million years of genomic stasis in endosymbiotic bacteria.</title>
        <authorList>
            <person name="Tamas I."/>
            <person name="Klasson L."/>
            <person name="Canbaeck B."/>
            <person name="Naeslund A.K."/>
            <person name="Eriksson A.-S."/>
            <person name="Wernegreen J.J."/>
            <person name="Sandstroem J.P."/>
            <person name="Moran N.A."/>
            <person name="Andersson S.G.E."/>
        </authorList>
    </citation>
    <scope>NUCLEOTIDE SEQUENCE [LARGE SCALE GENOMIC DNA]</scope>
    <source>
        <strain>Sg</strain>
    </source>
</reference>
<reference key="2">
    <citation type="journal article" date="1998" name="Mol. Biol. Evol.">
        <title>Evolutionary rates for tuf genes in endosymbionts of aphids.</title>
        <authorList>
            <person name="Brynnel E.U."/>
            <person name="Kurland C.G."/>
            <person name="Moran N.A."/>
            <person name="Andersson S.G."/>
        </authorList>
    </citation>
    <scope>NUCLEOTIDE SEQUENCE [GENOMIC DNA] OF 20-384</scope>
</reference>
<gene>
    <name evidence="2" type="primary">tuf</name>
    <name type="synonym">tufB</name>
    <name type="ordered locus">BUsg_507</name>
</gene>
<proteinExistence type="inferred from homology"/>
<name>EFTU_BUCAP</name>
<sequence>MSKEKFQRVKPHINVGTIGHVDHGKTTLTAAITTVLSKKYGGSARAFDQIDNAPEEKARGITINTSHVEYDTELRHYAHVDCPGHADYIKNMITGAAQMDGAILVVAATDGPMPQTREHILLGRQVGVPYIIVFLNKCDMVDDEELLELVEMEVRDLLTQYDFPGDDTPIIRGSALKALEGDADWESKILDLSKFLDTYIPEPKRAIDQPFLLPIEDVFSISGRGTVVTGRVERGIVKVGEEVEIVGIKKTTKTTCTGVEMFRKLLDEGRAGENVGVLLRGTKRDEIERGQVLAKPGSIHPHTTFESEVYVLSKEEGGRHTPFFKGYRPQFYFRTTDVTGSIELPEGVEMVMPGDNIKMTVTLIHPIAMADGLRFAIREGGRTVGAGVVSKVLV</sequence>
<accession>O31298</accession>
<dbReference type="EC" id="3.6.5.3" evidence="2"/>
<dbReference type="EMBL" id="AE013218">
    <property type="protein sequence ID" value="AAM68050.1"/>
    <property type="molecule type" value="Genomic_DNA"/>
</dbReference>
<dbReference type="EMBL" id="Y12308">
    <property type="protein sequence ID" value="CAA72975.1"/>
    <property type="molecule type" value="Genomic_DNA"/>
</dbReference>
<dbReference type="RefSeq" id="WP_011054016.1">
    <property type="nucleotide sequence ID" value="NC_004061.1"/>
</dbReference>
<dbReference type="SMR" id="O31298"/>
<dbReference type="STRING" id="198804.BUsg_507"/>
<dbReference type="GeneID" id="93003982"/>
<dbReference type="KEGG" id="bas:BUsg_507"/>
<dbReference type="eggNOG" id="COG0050">
    <property type="taxonomic scope" value="Bacteria"/>
</dbReference>
<dbReference type="HOGENOM" id="CLU_007265_0_2_6"/>
<dbReference type="Proteomes" id="UP000000416">
    <property type="component" value="Chromosome"/>
</dbReference>
<dbReference type="GO" id="GO:0005829">
    <property type="term" value="C:cytosol"/>
    <property type="evidence" value="ECO:0007669"/>
    <property type="project" value="TreeGrafter"/>
</dbReference>
<dbReference type="GO" id="GO:0005525">
    <property type="term" value="F:GTP binding"/>
    <property type="evidence" value="ECO:0007669"/>
    <property type="project" value="UniProtKB-UniRule"/>
</dbReference>
<dbReference type="GO" id="GO:0003924">
    <property type="term" value="F:GTPase activity"/>
    <property type="evidence" value="ECO:0007669"/>
    <property type="project" value="InterPro"/>
</dbReference>
<dbReference type="GO" id="GO:0097216">
    <property type="term" value="F:guanosine tetraphosphate binding"/>
    <property type="evidence" value="ECO:0007669"/>
    <property type="project" value="UniProtKB-ARBA"/>
</dbReference>
<dbReference type="GO" id="GO:0003746">
    <property type="term" value="F:translation elongation factor activity"/>
    <property type="evidence" value="ECO:0007669"/>
    <property type="project" value="UniProtKB-UniRule"/>
</dbReference>
<dbReference type="CDD" id="cd01884">
    <property type="entry name" value="EF_Tu"/>
    <property type="match status" value="1"/>
</dbReference>
<dbReference type="CDD" id="cd03697">
    <property type="entry name" value="EFTU_II"/>
    <property type="match status" value="1"/>
</dbReference>
<dbReference type="CDD" id="cd03707">
    <property type="entry name" value="EFTU_III"/>
    <property type="match status" value="1"/>
</dbReference>
<dbReference type="FunFam" id="2.40.30.10:FF:000001">
    <property type="entry name" value="Elongation factor Tu"/>
    <property type="match status" value="1"/>
</dbReference>
<dbReference type="FunFam" id="3.40.50.300:FF:000003">
    <property type="entry name" value="Elongation factor Tu"/>
    <property type="match status" value="1"/>
</dbReference>
<dbReference type="Gene3D" id="3.40.50.300">
    <property type="entry name" value="P-loop containing nucleotide triphosphate hydrolases"/>
    <property type="match status" value="1"/>
</dbReference>
<dbReference type="Gene3D" id="2.40.30.10">
    <property type="entry name" value="Translation factors"/>
    <property type="match status" value="2"/>
</dbReference>
<dbReference type="HAMAP" id="MF_00118_B">
    <property type="entry name" value="EF_Tu_B"/>
    <property type="match status" value="1"/>
</dbReference>
<dbReference type="InterPro" id="IPR041709">
    <property type="entry name" value="EF-Tu_GTP-bd"/>
</dbReference>
<dbReference type="InterPro" id="IPR050055">
    <property type="entry name" value="EF-Tu_GTPase"/>
</dbReference>
<dbReference type="InterPro" id="IPR004161">
    <property type="entry name" value="EFTu-like_2"/>
</dbReference>
<dbReference type="InterPro" id="IPR033720">
    <property type="entry name" value="EFTU_2"/>
</dbReference>
<dbReference type="InterPro" id="IPR031157">
    <property type="entry name" value="G_TR_CS"/>
</dbReference>
<dbReference type="InterPro" id="IPR027417">
    <property type="entry name" value="P-loop_NTPase"/>
</dbReference>
<dbReference type="InterPro" id="IPR005225">
    <property type="entry name" value="Small_GTP-bd"/>
</dbReference>
<dbReference type="InterPro" id="IPR000795">
    <property type="entry name" value="T_Tr_GTP-bd_dom"/>
</dbReference>
<dbReference type="InterPro" id="IPR009000">
    <property type="entry name" value="Transl_B-barrel_sf"/>
</dbReference>
<dbReference type="InterPro" id="IPR009001">
    <property type="entry name" value="Transl_elong_EF1A/Init_IF2_C"/>
</dbReference>
<dbReference type="InterPro" id="IPR004541">
    <property type="entry name" value="Transl_elong_EFTu/EF1A_bac/org"/>
</dbReference>
<dbReference type="InterPro" id="IPR004160">
    <property type="entry name" value="Transl_elong_EFTu/EF1A_C"/>
</dbReference>
<dbReference type="NCBIfam" id="TIGR00485">
    <property type="entry name" value="EF-Tu"/>
    <property type="match status" value="1"/>
</dbReference>
<dbReference type="NCBIfam" id="NF000766">
    <property type="entry name" value="PRK00049.1"/>
    <property type="match status" value="1"/>
</dbReference>
<dbReference type="NCBIfam" id="NF009372">
    <property type="entry name" value="PRK12735.1"/>
    <property type="match status" value="1"/>
</dbReference>
<dbReference type="NCBIfam" id="NF009373">
    <property type="entry name" value="PRK12736.1"/>
    <property type="match status" value="1"/>
</dbReference>
<dbReference type="NCBIfam" id="TIGR00231">
    <property type="entry name" value="small_GTP"/>
    <property type="match status" value="1"/>
</dbReference>
<dbReference type="PANTHER" id="PTHR43721:SF22">
    <property type="entry name" value="ELONGATION FACTOR TU, MITOCHONDRIAL"/>
    <property type="match status" value="1"/>
</dbReference>
<dbReference type="PANTHER" id="PTHR43721">
    <property type="entry name" value="ELONGATION FACTOR TU-RELATED"/>
    <property type="match status" value="1"/>
</dbReference>
<dbReference type="Pfam" id="PF00009">
    <property type="entry name" value="GTP_EFTU"/>
    <property type="match status" value="1"/>
</dbReference>
<dbReference type="Pfam" id="PF03144">
    <property type="entry name" value="GTP_EFTU_D2"/>
    <property type="match status" value="1"/>
</dbReference>
<dbReference type="Pfam" id="PF03143">
    <property type="entry name" value="GTP_EFTU_D3"/>
    <property type="match status" value="1"/>
</dbReference>
<dbReference type="PRINTS" id="PR00315">
    <property type="entry name" value="ELONGATNFCT"/>
</dbReference>
<dbReference type="SUPFAM" id="SSF50465">
    <property type="entry name" value="EF-Tu/eEF-1alpha/eIF2-gamma C-terminal domain"/>
    <property type="match status" value="1"/>
</dbReference>
<dbReference type="SUPFAM" id="SSF52540">
    <property type="entry name" value="P-loop containing nucleoside triphosphate hydrolases"/>
    <property type="match status" value="1"/>
</dbReference>
<dbReference type="SUPFAM" id="SSF50447">
    <property type="entry name" value="Translation proteins"/>
    <property type="match status" value="1"/>
</dbReference>
<dbReference type="PROSITE" id="PS00301">
    <property type="entry name" value="G_TR_1"/>
    <property type="match status" value="1"/>
</dbReference>
<dbReference type="PROSITE" id="PS51722">
    <property type="entry name" value="G_TR_2"/>
    <property type="match status" value="1"/>
</dbReference>